<gene>
    <name evidence="8" type="primary">psoE</name>
    <name type="ORF">AFUA_8G00580</name>
</gene>
<keyword id="KW-0002">3D-structure</keyword>
<keyword id="KW-1185">Reference proteome</keyword>
<keyword id="KW-0808">Transferase</keyword>
<sequence>MVFGTLYTFPGDQCRTIAIKAVAKANGLDLDIRETPRTPDHLSISKLGKVPAFQGADSFKLFECMAIALYITSQNEQTTLLGKDKKEYAEIIKWMSFFNTEIVILMTQQLLPQLGVIPYDRDQVEFFANMTQRSVDVVEEYLQDRTFLVGDQLSLADLFCAGNISLGFQFFYGKAWRQQNPNVSRWYEMVCHQPIYAAVTDKFQLLDEPKLTNNPPEKKPETVPKNGAAVAIEATQA</sequence>
<evidence type="ECO:0000255" key="1">
    <source>
        <dbReference type="PROSITE-ProRule" id="PRU00684"/>
    </source>
</evidence>
<evidence type="ECO:0000255" key="2">
    <source>
        <dbReference type="PROSITE-ProRule" id="PRU00685"/>
    </source>
</evidence>
<evidence type="ECO:0000256" key="3">
    <source>
        <dbReference type="SAM" id="MobiDB-lite"/>
    </source>
</evidence>
<evidence type="ECO:0000269" key="4">
    <source>
    </source>
</evidence>
<evidence type="ECO:0000269" key="5">
    <source>
    </source>
</evidence>
<evidence type="ECO:0000269" key="6">
    <source>
    </source>
</evidence>
<evidence type="ECO:0000269" key="7">
    <source>
    </source>
</evidence>
<evidence type="ECO:0000303" key="8">
    <source>
    </source>
</evidence>
<evidence type="ECO:0000305" key="9"/>
<evidence type="ECO:0000305" key="10">
    <source>
    </source>
</evidence>
<evidence type="ECO:0000305" key="11">
    <source>
    </source>
</evidence>
<evidence type="ECO:0007744" key="12">
    <source>
        <dbReference type="PDB" id="5F8B"/>
    </source>
</evidence>
<evidence type="ECO:0007744" key="13">
    <source>
        <dbReference type="PDB" id="5FHI"/>
    </source>
</evidence>
<evidence type="ECO:0007829" key="14">
    <source>
        <dbReference type="PDB" id="5FHI"/>
    </source>
</evidence>
<proteinExistence type="evidence at protein level"/>
<dbReference type="EC" id="2.5.1.-" evidence="7"/>
<dbReference type="EMBL" id="AAHF01000014">
    <property type="protein sequence ID" value="EAL85109.1"/>
    <property type="molecule type" value="Genomic_DNA"/>
</dbReference>
<dbReference type="RefSeq" id="XP_747147.1">
    <property type="nucleotide sequence ID" value="XM_742054.1"/>
</dbReference>
<dbReference type="PDB" id="5F8B">
    <property type="method" value="X-ray"/>
    <property type="resolution" value="2.54 A"/>
    <property type="chains" value="A=1-237"/>
</dbReference>
<dbReference type="PDB" id="5FHI">
    <property type="method" value="X-ray"/>
    <property type="resolution" value="2.41 A"/>
    <property type="chains" value="A=1-237"/>
</dbReference>
<dbReference type="PDBsum" id="5F8B"/>
<dbReference type="PDBsum" id="5FHI"/>
<dbReference type="SMR" id="Q4WB03"/>
<dbReference type="STRING" id="330879.Q4WB03"/>
<dbReference type="EnsemblFungi" id="EAL85109">
    <property type="protein sequence ID" value="EAL85109"/>
    <property type="gene ID" value="AFUA_8G00580"/>
</dbReference>
<dbReference type="GeneID" id="3504489"/>
<dbReference type="KEGG" id="afm:AFUA_8G00580"/>
<dbReference type="VEuPathDB" id="FungiDB:Afu8g00580"/>
<dbReference type="eggNOG" id="KOG0867">
    <property type="taxonomic scope" value="Eukaryota"/>
</dbReference>
<dbReference type="HOGENOM" id="CLU_011226_3_2_1"/>
<dbReference type="InParanoid" id="Q4WB03"/>
<dbReference type="OMA" id="MAIALYI"/>
<dbReference type="OrthoDB" id="249703at2759"/>
<dbReference type="Proteomes" id="UP000002530">
    <property type="component" value="Chromosome 8"/>
</dbReference>
<dbReference type="GO" id="GO:0005737">
    <property type="term" value="C:cytoplasm"/>
    <property type="evidence" value="ECO:0000318"/>
    <property type="project" value="GO_Central"/>
</dbReference>
<dbReference type="GO" id="GO:0005634">
    <property type="term" value="C:nucleus"/>
    <property type="evidence" value="ECO:0000318"/>
    <property type="project" value="GO_Central"/>
</dbReference>
<dbReference type="GO" id="GO:0016740">
    <property type="term" value="F:transferase activity"/>
    <property type="evidence" value="ECO:0007669"/>
    <property type="project" value="UniProtKB-KW"/>
</dbReference>
<dbReference type="CDD" id="cd03181">
    <property type="entry name" value="GST_C_EF1Bgamma_like"/>
    <property type="match status" value="1"/>
</dbReference>
<dbReference type="CDD" id="cd03044">
    <property type="entry name" value="GST_N_EF1Bgamma"/>
    <property type="match status" value="1"/>
</dbReference>
<dbReference type="FunFam" id="1.20.1050.10:FF:000006">
    <property type="entry name" value="Elongation factor 1 gamma"/>
    <property type="match status" value="1"/>
</dbReference>
<dbReference type="FunFam" id="3.40.30.10:FF:000142">
    <property type="entry name" value="Elongation factor 1 gamma"/>
    <property type="match status" value="1"/>
</dbReference>
<dbReference type="Gene3D" id="1.20.1050.10">
    <property type="match status" value="1"/>
</dbReference>
<dbReference type="Gene3D" id="3.40.30.10">
    <property type="entry name" value="Glutaredoxin"/>
    <property type="match status" value="1"/>
</dbReference>
<dbReference type="InterPro" id="IPR050802">
    <property type="entry name" value="EF-GSTs"/>
</dbReference>
<dbReference type="InterPro" id="IPR010987">
    <property type="entry name" value="Glutathione-S-Trfase_C-like"/>
</dbReference>
<dbReference type="InterPro" id="IPR036282">
    <property type="entry name" value="Glutathione-S-Trfase_C_sf"/>
</dbReference>
<dbReference type="InterPro" id="IPR040079">
    <property type="entry name" value="Glutathione_S-Trfase"/>
</dbReference>
<dbReference type="InterPro" id="IPR004045">
    <property type="entry name" value="Glutathione_S-Trfase_N"/>
</dbReference>
<dbReference type="InterPro" id="IPR004046">
    <property type="entry name" value="GST_C"/>
</dbReference>
<dbReference type="InterPro" id="IPR036249">
    <property type="entry name" value="Thioredoxin-like_sf"/>
</dbReference>
<dbReference type="PANTHER" id="PTHR43986">
    <property type="entry name" value="ELONGATION FACTOR 1-GAMMA"/>
    <property type="match status" value="1"/>
</dbReference>
<dbReference type="PANTHER" id="PTHR43986:SF1">
    <property type="entry name" value="ELONGATION FACTOR 1-GAMMA"/>
    <property type="match status" value="1"/>
</dbReference>
<dbReference type="Pfam" id="PF00043">
    <property type="entry name" value="GST_C"/>
    <property type="match status" value="1"/>
</dbReference>
<dbReference type="Pfam" id="PF02798">
    <property type="entry name" value="GST_N"/>
    <property type="match status" value="1"/>
</dbReference>
<dbReference type="SFLD" id="SFLDS00019">
    <property type="entry name" value="Glutathione_Transferase_(cytos"/>
    <property type="match status" value="1"/>
</dbReference>
<dbReference type="SFLD" id="SFLDG00358">
    <property type="entry name" value="Main_(cytGST)"/>
    <property type="match status" value="1"/>
</dbReference>
<dbReference type="SUPFAM" id="SSF47616">
    <property type="entry name" value="GST C-terminal domain-like"/>
    <property type="match status" value="1"/>
</dbReference>
<dbReference type="SUPFAM" id="SSF52833">
    <property type="entry name" value="Thioredoxin-like"/>
    <property type="match status" value="1"/>
</dbReference>
<dbReference type="PROSITE" id="PS50405">
    <property type="entry name" value="GST_CTER"/>
    <property type="match status" value="1"/>
</dbReference>
<dbReference type="PROSITE" id="PS50404">
    <property type="entry name" value="GST_NTER"/>
    <property type="match status" value="1"/>
</dbReference>
<name>PSOE_ASPFU</name>
<accession>Q4WB03</accession>
<protein>
    <recommendedName>
        <fullName evidence="8">Glutathione S-transferase psoE</fullName>
        <ecNumber evidence="7">2.5.1.-</ecNumber>
    </recommendedName>
    <alternativeName>
        <fullName evidence="8">Pseurotin biosynthesis protein E</fullName>
    </alternativeName>
</protein>
<organism>
    <name type="scientific">Aspergillus fumigatus (strain ATCC MYA-4609 / CBS 101355 / FGSC A1100 / Af293)</name>
    <name type="common">Neosartorya fumigata</name>
    <dbReference type="NCBI Taxonomy" id="330879"/>
    <lineage>
        <taxon>Eukaryota</taxon>
        <taxon>Fungi</taxon>
        <taxon>Dikarya</taxon>
        <taxon>Ascomycota</taxon>
        <taxon>Pezizomycotina</taxon>
        <taxon>Eurotiomycetes</taxon>
        <taxon>Eurotiomycetidae</taxon>
        <taxon>Eurotiales</taxon>
        <taxon>Aspergillaceae</taxon>
        <taxon>Aspergillus</taxon>
        <taxon>Aspergillus subgen. Fumigati</taxon>
    </lineage>
</organism>
<comment type="function">
    <text evidence="5 6 7">Glutathione S-transferase; part of the gene cluster that mediates the biosynthesis of pseurotin A, a competitive inhibitor of chitin synthase and an inducer of nerve-cell proliferation (PubMed:24082142, PubMed:24939566). The PKS-NRPS hybrid synthetase psoA is responsible for the biosynthesis of azaspirene, one of the first intermediates having the 1-oxa-7-azaspiro[4,4]-non-2-ene-4,6-dione core of pseurotin, via condensation of one acetyl-CoA, 4 malonyl-CoA, and a L-phenylalanine molecule (PubMed:24082142, PubMed:24939566). The dual-functional monooxygenase/methyltransferase psoF seems to be involved in the addition of the C3 methyl group onto the pseurotin scaffold (PubMed:24939566). Azaspirene is then converted to synerazol through 4 steps including oxidation of C17 by the cytochrome P450 monooxygenase psoD, O-methylation of the hydroxy group of C8 by the methyltransferase psoC, and the trans-to-cis isomerization of the C13 olefin by the glutathione S-transferase psoE (PubMed:24939566, PubMed:27072782). The fourth step of synerazol production is performed by the dual-functional monooxygenase/methyltransferase psoF which seems to catalyze the epoxidation of the intermediate deepoxy-synerazol (PubMed:24939566). Synerazol can be attacked by a water molecule nonenzymatically at two different positions to yield two diol products, pseurotin A and pseurotin D (PubMed:24939566).</text>
</comment>
<comment type="cofactor">
    <cofactor evidence="7">
        <name>glutathione</name>
        <dbReference type="ChEBI" id="CHEBI:57925"/>
    </cofactor>
</comment>
<comment type="pathway">
    <text evidence="7 10 11">Secondary metabolite biosynthesis.</text>
</comment>
<comment type="induction">
    <text evidence="4">Expression is induced under hypoxic conditions (PubMed:21388144).</text>
</comment>
<comment type="disruption phenotype">
    <text evidence="5 6">Abolishes the production of pseurotin but leads to the accumulation of deepoxy-synerazol (PubMed:24082142, PubMed:24939566).</text>
</comment>
<comment type="similarity">
    <text evidence="9">Belongs to the GST superfamily.</text>
</comment>
<reference key="1">
    <citation type="journal article" date="2005" name="Nature">
        <title>Genomic sequence of the pathogenic and allergenic filamentous fungus Aspergillus fumigatus.</title>
        <authorList>
            <person name="Nierman W.C."/>
            <person name="Pain A."/>
            <person name="Anderson M.J."/>
            <person name="Wortman J.R."/>
            <person name="Kim H.S."/>
            <person name="Arroyo J."/>
            <person name="Berriman M."/>
            <person name="Abe K."/>
            <person name="Archer D.B."/>
            <person name="Bermejo C."/>
            <person name="Bennett J.W."/>
            <person name="Bowyer P."/>
            <person name="Chen D."/>
            <person name="Collins M."/>
            <person name="Coulsen R."/>
            <person name="Davies R."/>
            <person name="Dyer P.S."/>
            <person name="Farman M.L."/>
            <person name="Fedorova N."/>
            <person name="Fedorova N.D."/>
            <person name="Feldblyum T.V."/>
            <person name="Fischer R."/>
            <person name="Fosker N."/>
            <person name="Fraser A."/>
            <person name="Garcia J.L."/>
            <person name="Garcia M.J."/>
            <person name="Goble A."/>
            <person name="Goldman G.H."/>
            <person name="Gomi K."/>
            <person name="Griffith-Jones S."/>
            <person name="Gwilliam R."/>
            <person name="Haas B.J."/>
            <person name="Haas H."/>
            <person name="Harris D.E."/>
            <person name="Horiuchi H."/>
            <person name="Huang J."/>
            <person name="Humphray S."/>
            <person name="Jimenez J."/>
            <person name="Keller N."/>
            <person name="Khouri H."/>
            <person name="Kitamoto K."/>
            <person name="Kobayashi T."/>
            <person name="Konzack S."/>
            <person name="Kulkarni R."/>
            <person name="Kumagai T."/>
            <person name="Lafton A."/>
            <person name="Latge J.-P."/>
            <person name="Li W."/>
            <person name="Lord A."/>
            <person name="Lu C."/>
            <person name="Majoros W.H."/>
            <person name="May G.S."/>
            <person name="Miller B.L."/>
            <person name="Mohamoud Y."/>
            <person name="Molina M."/>
            <person name="Monod M."/>
            <person name="Mouyna I."/>
            <person name="Mulligan S."/>
            <person name="Murphy L.D."/>
            <person name="O'Neil S."/>
            <person name="Paulsen I."/>
            <person name="Penalva M.A."/>
            <person name="Pertea M."/>
            <person name="Price C."/>
            <person name="Pritchard B.L."/>
            <person name="Quail M.A."/>
            <person name="Rabbinowitsch E."/>
            <person name="Rawlins N."/>
            <person name="Rajandream M.A."/>
            <person name="Reichard U."/>
            <person name="Renauld H."/>
            <person name="Robson G.D."/>
            <person name="Rodriguez de Cordoba S."/>
            <person name="Rodriguez-Pena J.M."/>
            <person name="Ronning C.M."/>
            <person name="Rutter S."/>
            <person name="Salzberg S.L."/>
            <person name="Sanchez M."/>
            <person name="Sanchez-Ferrero J.C."/>
            <person name="Saunders D."/>
            <person name="Seeger K."/>
            <person name="Squares R."/>
            <person name="Squares S."/>
            <person name="Takeuchi M."/>
            <person name="Tekaia F."/>
            <person name="Turner G."/>
            <person name="Vazquez de Aldana C.R."/>
            <person name="Weidman J."/>
            <person name="White O."/>
            <person name="Woodward J.R."/>
            <person name="Yu J.-H."/>
            <person name="Fraser C.M."/>
            <person name="Galagan J.E."/>
            <person name="Asai K."/>
            <person name="Machida M."/>
            <person name="Hall N."/>
            <person name="Barrell B.G."/>
            <person name="Denning D.W."/>
        </authorList>
    </citation>
    <scope>NUCLEOTIDE SEQUENCE [LARGE SCALE GENOMIC DNA]</scope>
    <source>
        <strain>ATCC MYA-4609 / CBS 101355 / FGSC A1100 / Af293</strain>
    </source>
</reference>
<reference key="2">
    <citation type="journal article" date="2011" name="J. Proteome Res.">
        <title>Analysis of the Aspergillus fumigatus proteome reveals metabolic changes and the activation of the pseurotin A biosynthesis gene cluster in response to hypoxia.</title>
        <authorList>
            <person name="Voedisch M."/>
            <person name="Scherlach K."/>
            <person name="Winkler R."/>
            <person name="Hertweck C."/>
            <person name="Braun H.P."/>
            <person name="Roth M."/>
            <person name="Haas H."/>
            <person name="Werner E.R."/>
            <person name="Brakhage A.A."/>
            <person name="Kniemeyer O."/>
        </authorList>
    </citation>
    <scope>INDUCTION</scope>
</reference>
<reference key="3">
    <citation type="journal article" date="2013" name="Proc. Natl. Acad. Sci. U.S.A.">
        <title>Prototype of an intertwined secondary-metabolite supercluster.</title>
        <authorList>
            <person name="Wiemann P."/>
            <person name="Guo C.J."/>
            <person name="Palmer J.M."/>
            <person name="Sekonyela R."/>
            <person name="Wang C.C."/>
            <person name="Keller N.P."/>
        </authorList>
    </citation>
    <scope>FUNCTION</scope>
    <scope>DISRUPTION PHENOTYPE</scope>
</reference>
<reference key="4">
    <citation type="journal article" date="2014" name="Angew. Chem. Int. Ed.">
        <title>Elucidation of pseurotin biosynthetic pathway points to trans-acting C-methyltransferase: generation of chemical diversity.</title>
        <authorList>
            <person name="Tsunematsu Y."/>
            <person name="Fukutomi M."/>
            <person name="Saruwatari T."/>
            <person name="Noguchi H."/>
            <person name="Hotta K."/>
            <person name="Tang Y."/>
            <person name="Watanabe K."/>
        </authorList>
    </citation>
    <scope>FUNCTION</scope>
    <scope>DISRUPTION PHENOTYPE</scope>
</reference>
<reference key="5">
    <citation type="journal article" date="2016" name="Angew. Chem. Int. Ed.">
        <title>Oxidative trans to cis Isomerization of Olefins in Polyketide Biosynthesis.</title>
        <authorList>
            <person name="Yamamoto T."/>
            <person name="Tsunematsu Y."/>
            <person name="Hara K."/>
            <person name="Suzuki T."/>
            <person name="Kishimoto S."/>
            <person name="Kawagishi H."/>
            <person name="Noguchi H."/>
            <person name="Hashimoto H."/>
            <person name="Tang Y."/>
            <person name="Hotta K."/>
            <person name="Watanabe K."/>
        </authorList>
    </citation>
    <scope>X-RAY CRYSTALLOGRAPHY (2.41 ANGSTROMS) IN COMPLEX WITH SUBSTRATE AND GLUTATHIONE</scope>
    <scope>FUNCTION</scope>
    <scope>CATALYTIC ACTIVITY</scope>
    <scope>COFACTOR</scope>
</reference>
<feature type="chain" id="PRO_0000438219" description="Glutathione S-transferase psoE">
    <location>
        <begin position="1"/>
        <end position="237"/>
    </location>
</feature>
<feature type="domain" description="GST N-terminal" evidence="1">
    <location>
        <begin position="2"/>
        <end position="79"/>
    </location>
</feature>
<feature type="domain" description="GST C-terminal" evidence="2">
    <location>
        <begin position="84"/>
        <end position="222"/>
    </location>
</feature>
<feature type="region of interest" description="Disordered" evidence="3">
    <location>
        <begin position="208"/>
        <end position="237"/>
    </location>
</feature>
<feature type="compositionally biased region" description="Basic and acidic residues" evidence="3">
    <location>
        <begin position="208"/>
        <end position="222"/>
    </location>
</feature>
<feature type="binding site" evidence="7 13">
    <location>
        <position position="37"/>
    </location>
    <ligand>
        <name>glutathione</name>
        <dbReference type="ChEBI" id="CHEBI:57925"/>
    </ligand>
</feature>
<feature type="binding site" evidence="7 13">
    <location>
        <position position="49"/>
    </location>
    <ligand>
        <name>glutathione</name>
        <dbReference type="ChEBI" id="CHEBI:57925"/>
    </ligand>
</feature>
<feature type="binding site" evidence="7 13">
    <location>
        <position position="49"/>
    </location>
    <ligand>
        <name>substrate</name>
    </ligand>
</feature>
<feature type="binding site" evidence="7 13">
    <location>
        <position position="50"/>
    </location>
    <ligand>
        <name>glutathione</name>
        <dbReference type="ChEBI" id="CHEBI:57925"/>
    </ligand>
</feature>
<feature type="binding site" evidence="7 13">
    <location>
        <position position="63"/>
    </location>
    <ligand>
        <name>glutathione</name>
        <dbReference type="ChEBI" id="CHEBI:57925"/>
    </ligand>
</feature>
<feature type="binding site" evidence="7 13">
    <location>
        <position position="64"/>
    </location>
    <ligand>
        <name>glutathione</name>
        <dbReference type="ChEBI" id="CHEBI:57925"/>
    </ligand>
</feature>
<feature type="binding site" evidence="7 12">
    <location>
        <position position="99"/>
    </location>
    <ligand>
        <name>glutathione</name>
        <dbReference type="ChEBI" id="CHEBI:57925"/>
    </ligand>
</feature>
<feature type="binding site" evidence="7 12">
    <location>
        <position position="108"/>
    </location>
    <ligand>
        <name>substrate</name>
    </ligand>
</feature>
<feature type="strand" evidence="14">
    <location>
        <begin position="2"/>
        <end position="7"/>
    </location>
</feature>
<feature type="turn" evidence="14">
    <location>
        <begin position="14"/>
        <end position="16"/>
    </location>
</feature>
<feature type="helix" evidence="14">
    <location>
        <begin position="17"/>
        <end position="25"/>
    </location>
</feature>
<feature type="strand" evidence="14">
    <location>
        <begin position="29"/>
        <end position="33"/>
    </location>
</feature>
<feature type="helix" evidence="14">
    <location>
        <begin position="39"/>
        <end position="44"/>
    </location>
</feature>
<feature type="strand" evidence="14">
    <location>
        <begin position="50"/>
        <end position="55"/>
    </location>
</feature>
<feature type="strand" evidence="14">
    <location>
        <begin position="60"/>
        <end position="63"/>
    </location>
</feature>
<feature type="helix" evidence="14">
    <location>
        <begin position="64"/>
        <end position="73"/>
    </location>
</feature>
<feature type="helix" evidence="14">
    <location>
        <begin position="85"/>
        <end position="101"/>
    </location>
</feature>
<feature type="helix" evidence="14">
    <location>
        <begin position="103"/>
        <end position="110"/>
    </location>
</feature>
<feature type="helix" evidence="14">
    <location>
        <begin position="111"/>
        <end position="113"/>
    </location>
</feature>
<feature type="strand" evidence="14">
    <location>
        <begin position="115"/>
        <end position="117"/>
    </location>
</feature>
<feature type="helix" evidence="14">
    <location>
        <begin position="121"/>
        <end position="141"/>
    </location>
</feature>
<feature type="turn" evidence="14">
    <location>
        <begin position="142"/>
        <end position="144"/>
    </location>
</feature>
<feature type="strand" evidence="14">
    <location>
        <begin position="146"/>
        <end position="149"/>
    </location>
</feature>
<feature type="helix" evidence="14">
    <location>
        <begin position="155"/>
        <end position="170"/>
    </location>
</feature>
<feature type="helix" evidence="14">
    <location>
        <begin position="174"/>
        <end position="179"/>
    </location>
</feature>
<feature type="helix" evidence="14">
    <location>
        <begin position="181"/>
        <end position="190"/>
    </location>
</feature>
<feature type="helix" evidence="14">
    <location>
        <begin position="194"/>
        <end position="197"/>
    </location>
</feature>